<evidence type="ECO:0000250" key="1"/>
<evidence type="ECO:0000255" key="2">
    <source>
        <dbReference type="PROSITE-ProRule" id="PRU00277"/>
    </source>
</evidence>
<evidence type="ECO:0000305" key="3"/>
<name>FKB1A_XENLA</name>
<comment type="function">
    <text>Keeps in an inactive conformation TGFBR1, the TGF-beta type I serine/threonine kinase receptor, preventing TGF-beta receptor activation in absence of ligand. May modulate the RYR1 calcium channel activity. PPIases accelerate the folding of proteins. It catalyzes the cis-trans isomerization of proline imidic peptide bonds in oligopeptides.</text>
</comment>
<comment type="catalytic activity">
    <reaction>
        <text>[protein]-peptidylproline (omega=180) = [protein]-peptidylproline (omega=0)</text>
        <dbReference type="Rhea" id="RHEA:16237"/>
        <dbReference type="Rhea" id="RHEA-COMP:10747"/>
        <dbReference type="Rhea" id="RHEA-COMP:10748"/>
        <dbReference type="ChEBI" id="CHEBI:83833"/>
        <dbReference type="ChEBI" id="CHEBI:83834"/>
        <dbReference type="EC" id="5.2.1.8"/>
    </reaction>
</comment>
<comment type="activity regulation">
    <text>Inhibited by both FK506 and rapamycin.</text>
</comment>
<comment type="subcellular location">
    <subcellularLocation>
        <location evidence="1">Cytoplasm</location>
    </subcellularLocation>
</comment>
<comment type="similarity">
    <text evidence="3">Belongs to the FKBP-type PPIase family. FKBP1 subfamily.</text>
</comment>
<accession>O42123</accession>
<accession>Q5D0D0</accession>
<sequence>MGVQVETITEGDGRTFPKKGQTVVVHYVGSLENGKKFDSSRDRNKPFKFIIGRCEVIRGWEEGVAQMSVGQRARLTCSPDFAYGATGHPGIIPPNATLTFDVELLRLE</sequence>
<gene>
    <name type="primary">fkbp1a</name>
</gene>
<dbReference type="EC" id="5.2.1.8"/>
<dbReference type="EMBL" id="AB006678">
    <property type="protein sequence ID" value="BAA23102.1"/>
    <property type="molecule type" value="mRNA"/>
</dbReference>
<dbReference type="EMBL" id="BC041248">
    <property type="protein sequence ID" value="AAH41248.1"/>
    <property type="molecule type" value="mRNA"/>
</dbReference>
<dbReference type="PIR" id="JC5764">
    <property type="entry name" value="JC5764"/>
</dbReference>
<dbReference type="RefSeq" id="NP_001079382.1">
    <property type="nucleotide sequence ID" value="NM_001085913.1"/>
</dbReference>
<dbReference type="RefSeq" id="XP_018089486.1">
    <property type="nucleotide sequence ID" value="XM_018233997.1"/>
</dbReference>
<dbReference type="SMR" id="O42123"/>
<dbReference type="DNASU" id="379069"/>
<dbReference type="GeneID" id="379069"/>
<dbReference type="KEGG" id="xla:379069"/>
<dbReference type="AGR" id="Xenbase:XB-GENE-5836974"/>
<dbReference type="CTD" id="379069"/>
<dbReference type="Xenbase" id="XB-GENE-5836974">
    <property type="gene designation" value="fkbp1a.L"/>
</dbReference>
<dbReference type="OrthoDB" id="1902587at2759"/>
<dbReference type="Proteomes" id="UP000186698">
    <property type="component" value="Chromosome 9_10L"/>
</dbReference>
<dbReference type="Bgee" id="379069">
    <property type="expression patterns" value="Expressed in internal ear and 19 other cell types or tissues"/>
</dbReference>
<dbReference type="GO" id="GO:0005737">
    <property type="term" value="C:cytoplasm"/>
    <property type="evidence" value="ECO:0000247"/>
    <property type="project" value="AgBase"/>
</dbReference>
<dbReference type="GO" id="GO:0098562">
    <property type="term" value="C:cytoplasmic side of membrane"/>
    <property type="evidence" value="ECO:0000250"/>
    <property type="project" value="UniProtKB"/>
</dbReference>
<dbReference type="GO" id="GO:0005829">
    <property type="term" value="C:cytosol"/>
    <property type="evidence" value="ECO:0000247"/>
    <property type="project" value="AgBase"/>
</dbReference>
<dbReference type="GO" id="GO:0070062">
    <property type="term" value="C:extracellular exosome"/>
    <property type="evidence" value="ECO:0000247"/>
    <property type="project" value="AgBase"/>
</dbReference>
<dbReference type="GO" id="GO:0016020">
    <property type="term" value="C:membrane"/>
    <property type="evidence" value="ECO:0000247"/>
    <property type="project" value="AgBase"/>
</dbReference>
<dbReference type="GO" id="GO:1990425">
    <property type="term" value="C:ryanodine receptor complex"/>
    <property type="evidence" value="ECO:0000250"/>
    <property type="project" value="UniProtKB"/>
</dbReference>
<dbReference type="GO" id="GO:0033017">
    <property type="term" value="C:sarcoplasmic reticulum membrane"/>
    <property type="evidence" value="ECO:0000247"/>
    <property type="project" value="AgBase"/>
</dbReference>
<dbReference type="GO" id="GO:0014802">
    <property type="term" value="C:terminal cisterna"/>
    <property type="evidence" value="ECO:0000314"/>
    <property type="project" value="AgBase"/>
</dbReference>
<dbReference type="GO" id="GO:0030018">
    <property type="term" value="C:Z disc"/>
    <property type="evidence" value="ECO:0000247"/>
    <property type="project" value="AgBase"/>
</dbReference>
<dbReference type="GO" id="GO:0048185">
    <property type="term" value="F:activin binding"/>
    <property type="evidence" value="ECO:0000247"/>
    <property type="project" value="AgBase"/>
</dbReference>
<dbReference type="GO" id="GO:0019855">
    <property type="term" value="F:calcium channel inhibitor activity"/>
    <property type="evidence" value="ECO:0000247"/>
    <property type="project" value="AgBase"/>
</dbReference>
<dbReference type="GO" id="GO:0005528">
    <property type="term" value="F:FK506 binding"/>
    <property type="evidence" value="ECO:0000247"/>
    <property type="project" value="AgBase"/>
</dbReference>
<dbReference type="GO" id="GO:0003755">
    <property type="term" value="F:peptidyl-prolyl cis-trans isomerase activity"/>
    <property type="evidence" value="ECO:0000247"/>
    <property type="project" value="AgBase"/>
</dbReference>
<dbReference type="GO" id="GO:0042803">
    <property type="term" value="F:protein homodimerization activity"/>
    <property type="evidence" value="ECO:0000247"/>
    <property type="project" value="AgBase"/>
</dbReference>
<dbReference type="GO" id="GO:0046332">
    <property type="term" value="F:SMAD binding"/>
    <property type="evidence" value="ECO:0000247"/>
    <property type="project" value="AgBase"/>
</dbReference>
<dbReference type="GO" id="GO:0044325">
    <property type="term" value="F:transmembrane transporter binding"/>
    <property type="evidence" value="ECO:0000247"/>
    <property type="project" value="AgBase"/>
</dbReference>
<dbReference type="GO" id="GO:1990000">
    <property type="term" value="P:amyloid fibril formation"/>
    <property type="evidence" value="ECO:0000247"/>
    <property type="project" value="AgBase"/>
</dbReference>
<dbReference type="GO" id="GO:0019221">
    <property type="term" value="P:cytokine-mediated signaling pathway"/>
    <property type="evidence" value="ECO:0000247"/>
    <property type="project" value="AgBase"/>
</dbReference>
<dbReference type="GO" id="GO:0003007">
    <property type="term" value="P:heart morphogenesis"/>
    <property type="evidence" value="ECO:0000247"/>
    <property type="project" value="AgBase"/>
</dbReference>
<dbReference type="GO" id="GO:0060347">
    <property type="term" value="P:heart trabecula formation"/>
    <property type="evidence" value="ECO:0000247"/>
    <property type="project" value="AgBase"/>
</dbReference>
<dbReference type="GO" id="GO:0006936">
    <property type="term" value="P:muscle contraction"/>
    <property type="evidence" value="ECO:0000247"/>
    <property type="project" value="AgBase"/>
</dbReference>
<dbReference type="GO" id="GO:0001933">
    <property type="term" value="P:negative regulation of protein phosphorylation"/>
    <property type="evidence" value="ECO:0000247"/>
    <property type="project" value="AgBase"/>
</dbReference>
<dbReference type="GO" id="GO:0051280">
    <property type="term" value="P:negative regulation of release of sequestered calcium ion into cytosol"/>
    <property type="evidence" value="ECO:0000247"/>
    <property type="project" value="AgBase"/>
</dbReference>
<dbReference type="GO" id="GO:0060315">
    <property type="term" value="P:negative regulation of ryanodine-sensitive calcium-release channel activity"/>
    <property type="evidence" value="ECO:0000247"/>
    <property type="project" value="AgBase"/>
</dbReference>
<dbReference type="GO" id="GO:0043123">
    <property type="term" value="P:positive regulation of canonical NF-kappaB signal transduction"/>
    <property type="evidence" value="ECO:0000247"/>
    <property type="project" value="AgBase"/>
</dbReference>
<dbReference type="GO" id="GO:0032092">
    <property type="term" value="P:positive regulation of protein binding"/>
    <property type="evidence" value="ECO:0000247"/>
    <property type="project" value="AgBase"/>
</dbReference>
<dbReference type="GO" id="GO:0031398">
    <property type="term" value="P:positive regulation of protein ubiquitination"/>
    <property type="evidence" value="ECO:0000247"/>
    <property type="project" value="AgBase"/>
</dbReference>
<dbReference type="GO" id="GO:0000413">
    <property type="term" value="P:protein peptidyl-prolyl isomerization"/>
    <property type="evidence" value="ECO:0000247"/>
    <property type="project" value="AgBase"/>
</dbReference>
<dbReference type="GO" id="GO:0032925">
    <property type="term" value="P:regulation of activin receptor signaling pathway"/>
    <property type="evidence" value="ECO:0000247"/>
    <property type="project" value="AgBase"/>
</dbReference>
<dbReference type="GO" id="GO:1902991">
    <property type="term" value="P:regulation of amyloid precursor protein catabolic process"/>
    <property type="evidence" value="ECO:0000247"/>
    <property type="project" value="AgBase"/>
</dbReference>
<dbReference type="GO" id="GO:0050776">
    <property type="term" value="P:regulation of immune response"/>
    <property type="evidence" value="ECO:0000247"/>
    <property type="project" value="AgBase"/>
</dbReference>
<dbReference type="GO" id="GO:0032880">
    <property type="term" value="P:regulation of protein localization"/>
    <property type="evidence" value="ECO:0000247"/>
    <property type="project" value="AgBase"/>
</dbReference>
<dbReference type="GO" id="GO:0060314">
    <property type="term" value="P:regulation of ryanodine-sensitive calcium-release channel activity"/>
    <property type="evidence" value="ECO:0000315"/>
    <property type="project" value="AgBase"/>
</dbReference>
<dbReference type="GO" id="GO:0051209">
    <property type="term" value="P:release of sequestered calcium ion into cytosol"/>
    <property type="evidence" value="ECO:0000247"/>
    <property type="project" value="AgBase"/>
</dbReference>
<dbReference type="GO" id="GO:0097435">
    <property type="term" value="P:supramolecular fiber organization"/>
    <property type="evidence" value="ECO:0000247"/>
    <property type="project" value="AgBase"/>
</dbReference>
<dbReference type="GO" id="GO:0042098">
    <property type="term" value="P:T cell proliferation"/>
    <property type="evidence" value="ECO:0000247"/>
    <property type="project" value="AgBase"/>
</dbReference>
<dbReference type="GO" id="GO:0055010">
    <property type="term" value="P:ventricular cardiac muscle tissue morphogenesis"/>
    <property type="evidence" value="ECO:0000247"/>
    <property type="project" value="AgBase"/>
</dbReference>
<dbReference type="FunFam" id="3.10.50.40:FF:000008">
    <property type="entry name" value="Peptidylprolyl isomerase"/>
    <property type="match status" value="1"/>
</dbReference>
<dbReference type="Gene3D" id="3.10.50.40">
    <property type="match status" value="1"/>
</dbReference>
<dbReference type="InterPro" id="IPR050689">
    <property type="entry name" value="FKBP-type_PPIase"/>
</dbReference>
<dbReference type="InterPro" id="IPR046357">
    <property type="entry name" value="PPIase_dom_sf"/>
</dbReference>
<dbReference type="InterPro" id="IPR001179">
    <property type="entry name" value="PPIase_FKBP_dom"/>
</dbReference>
<dbReference type="PANTHER" id="PTHR10516">
    <property type="entry name" value="PEPTIDYL-PROLYL CIS-TRANS ISOMERASE"/>
    <property type="match status" value="1"/>
</dbReference>
<dbReference type="PANTHER" id="PTHR10516:SF301">
    <property type="entry name" value="PEPTIDYL-PROLYL CIS-TRANS ISOMERASE FKBP1A-RELATED"/>
    <property type="match status" value="1"/>
</dbReference>
<dbReference type="Pfam" id="PF00254">
    <property type="entry name" value="FKBP_C"/>
    <property type="match status" value="1"/>
</dbReference>
<dbReference type="SUPFAM" id="SSF54534">
    <property type="entry name" value="FKBP-like"/>
    <property type="match status" value="1"/>
</dbReference>
<dbReference type="PROSITE" id="PS50059">
    <property type="entry name" value="FKBP_PPIASE"/>
    <property type="match status" value="1"/>
</dbReference>
<proteinExistence type="inferred from homology"/>
<feature type="initiator methionine" description="Removed" evidence="1">
    <location>
        <position position="1"/>
    </location>
</feature>
<feature type="chain" id="PRO_0000075293" description="Peptidyl-prolyl cis-trans isomerase FKBP1A">
    <location>
        <begin position="2"/>
        <end position="108"/>
    </location>
</feature>
<feature type="domain" description="PPIase FKBP-type" evidence="2">
    <location>
        <begin position="20"/>
        <end position="108"/>
    </location>
</feature>
<reference key="1">
    <citation type="journal article" date="1997" name="Biochem. Biophys. Res. Commun.">
        <title>Xenopus FK 506-binding protein homolog induces a secondary axis in frog embryos, which is inhibited by coexisting BMP 4 signaling.</title>
        <authorList>
            <person name="Nishinakmaura R."/>
            <person name="Matsumoto Y."/>
            <person name="Uochi T."/>
            <person name="Asashima M."/>
            <person name="Yokota T."/>
        </authorList>
    </citation>
    <scope>NUCLEOTIDE SEQUENCE [MRNA]</scope>
</reference>
<reference key="2">
    <citation type="submission" date="2002-12" db="EMBL/GenBank/DDBJ databases">
        <authorList>
            <consortium name="NIH - Xenopus Gene Collection (XGC) project"/>
        </authorList>
    </citation>
    <scope>NUCLEOTIDE SEQUENCE [LARGE SCALE MRNA]</scope>
    <source>
        <tissue>Embryo</tissue>
    </source>
</reference>
<organism>
    <name type="scientific">Xenopus laevis</name>
    <name type="common">African clawed frog</name>
    <dbReference type="NCBI Taxonomy" id="8355"/>
    <lineage>
        <taxon>Eukaryota</taxon>
        <taxon>Metazoa</taxon>
        <taxon>Chordata</taxon>
        <taxon>Craniata</taxon>
        <taxon>Vertebrata</taxon>
        <taxon>Euteleostomi</taxon>
        <taxon>Amphibia</taxon>
        <taxon>Batrachia</taxon>
        <taxon>Anura</taxon>
        <taxon>Pipoidea</taxon>
        <taxon>Pipidae</taxon>
        <taxon>Xenopodinae</taxon>
        <taxon>Xenopus</taxon>
        <taxon>Xenopus</taxon>
    </lineage>
</organism>
<protein>
    <recommendedName>
        <fullName>Peptidyl-prolyl cis-trans isomerase FKBP1A</fullName>
        <shortName>PPIase FKBP1A</shortName>
        <ecNumber>5.2.1.8</ecNumber>
    </recommendedName>
    <alternativeName>
        <fullName>12 kDa FK506-binding protein</fullName>
        <shortName>12 kDa FKBP</shortName>
        <shortName>FKBP-12</shortName>
    </alternativeName>
    <alternativeName>
        <fullName>FK506-binding protein 1A</fullName>
        <shortName>FKBP-1A</shortName>
    </alternativeName>
    <alternativeName>
        <fullName>Immunophilin FKBP12</fullName>
    </alternativeName>
    <alternativeName>
        <fullName>Rotamase</fullName>
    </alternativeName>
</protein>
<keyword id="KW-0963">Cytoplasm</keyword>
<keyword id="KW-0413">Isomerase</keyword>
<keyword id="KW-1185">Reference proteome</keyword>
<keyword id="KW-0697">Rotamase</keyword>